<organism>
    <name type="scientific">Rhizopus stolonifer</name>
    <name type="common">Rhizopus nigricans</name>
    <dbReference type="NCBI Taxonomy" id="4846"/>
    <lineage>
        <taxon>Eukaryota</taxon>
        <taxon>Fungi</taxon>
        <taxon>Fungi incertae sedis</taxon>
        <taxon>Mucoromycota</taxon>
        <taxon>Mucoromycotina</taxon>
        <taxon>Mucoromycetes</taxon>
        <taxon>Mucorales</taxon>
        <taxon>Mucorineae</taxon>
        <taxon>Rhizopodaceae</taxon>
        <taxon>Rhizopus</taxon>
    </lineage>
</organism>
<dbReference type="EMBL" id="AF290427">
    <property type="protein sequence ID" value="AAG23835.1"/>
    <property type="molecule type" value="mRNA"/>
</dbReference>
<dbReference type="SMR" id="Q9HFV1"/>
<dbReference type="GO" id="GO:0005789">
    <property type="term" value="C:endoplasmic reticulum membrane"/>
    <property type="evidence" value="ECO:0007669"/>
    <property type="project" value="UniProtKB-SubCell"/>
</dbReference>
<dbReference type="GO" id="GO:0020037">
    <property type="term" value="F:heme binding"/>
    <property type="evidence" value="ECO:0007669"/>
    <property type="project" value="InterPro"/>
</dbReference>
<dbReference type="GO" id="GO:0046872">
    <property type="term" value="F:metal ion binding"/>
    <property type="evidence" value="ECO:0007669"/>
    <property type="project" value="UniProtKB-KW"/>
</dbReference>
<dbReference type="FunFam" id="3.10.120.10:FF:000002">
    <property type="entry name" value="Cytochrome b5 type B"/>
    <property type="match status" value="1"/>
</dbReference>
<dbReference type="Gene3D" id="3.10.120.10">
    <property type="entry name" value="Cytochrome b5-like heme/steroid binding domain"/>
    <property type="match status" value="1"/>
</dbReference>
<dbReference type="InterPro" id="IPR001199">
    <property type="entry name" value="Cyt_B5-like_heme/steroid-bd"/>
</dbReference>
<dbReference type="InterPro" id="IPR036400">
    <property type="entry name" value="Cyt_B5-like_heme/steroid_sf"/>
</dbReference>
<dbReference type="InterPro" id="IPR018506">
    <property type="entry name" value="Cyt_B5_heme-BS"/>
</dbReference>
<dbReference type="InterPro" id="IPR050668">
    <property type="entry name" value="Cytochrome_b5"/>
</dbReference>
<dbReference type="PANTHER" id="PTHR19359">
    <property type="entry name" value="CYTOCHROME B5"/>
    <property type="match status" value="1"/>
</dbReference>
<dbReference type="Pfam" id="PF00173">
    <property type="entry name" value="Cyt-b5"/>
    <property type="match status" value="1"/>
</dbReference>
<dbReference type="PRINTS" id="PR00363">
    <property type="entry name" value="CYTOCHROMEB5"/>
</dbReference>
<dbReference type="SMART" id="SM01117">
    <property type="entry name" value="Cyt-b5"/>
    <property type="match status" value="1"/>
</dbReference>
<dbReference type="SUPFAM" id="SSF55856">
    <property type="entry name" value="Cytochrome b5-like heme/steroid binding domain"/>
    <property type="match status" value="1"/>
</dbReference>
<dbReference type="PROSITE" id="PS00191">
    <property type="entry name" value="CYTOCHROME_B5_1"/>
    <property type="match status" value="1"/>
</dbReference>
<dbReference type="PROSITE" id="PS50255">
    <property type="entry name" value="CYTOCHROME_B5_2"/>
    <property type="match status" value="1"/>
</dbReference>
<comment type="function">
    <text evidence="1">Membrane bound hemoprotein which function as an electron carrier for several membrane bound oxygenases.</text>
</comment>
<comment type="subcellular location">
    <subcellularLocation>
        <location evidence="1">Endoplasmic reticulum membrane</location>
        <topology evidence="1">Single-pass membrane protein</topology>
        <orientation evidence="1">Cytoplasmic side</orientation>
    </subcellularLocation>
    <subcellularLocation>
        <location evidence="1">Microsome membrane</location>
        <topology evidence="1">Single-pass membrane protein</topology>
        <orientation evidence="1">Cytoplasmic side</orientation>
    </subcellularLocation>
</comment>
<comment type="similarity">
    <text evidence="4">Belongs to the cytochrome b5 family.</text>
</comment>
<proteinExistence type="evidence at transcript level"/>
<keyword id="KW-0249">Electron transport</keyword>
<keyword id="KW-0256">Endoplasmic reticulum</keyword>
<keyword id="KW-0349">Heme</keyword>
<keyword id="KW-0408">Iron</keyword>
<keyword id="KW-0472">Membrane</keyword>
<keyword id="KW-0479">Metal-binding</keyword>
<keyword id="KW-0492">Microsome</keyword>
<keyword id="KW-0812">Transmembrane</keyword>
<keyword id="KW-1133">Transmembrane helix</keyword>
<keyword id="KW-0813">Transport</keyword>
<name>CYB5_RHIST</name>
<accession>Q9HFV1</accession>
<protein>
    <recommendedName>
        <fullName>Cytochrome b5</fullName>
    </recommendedName>
</protein>
<evidence type="ECO:0000250" key="1"/>
<evidence type="ECO:0000255" key="2"/>
<evidence type="ECO:0000255" key="3">
    <source>
        <dbReference type="PROSITE-ProRule" id="PRU00279"/>
    </source>
</evidence>
<evidence type="ECO:0000305" key="4"/>
<reference key="1">
    <citation type="journal article" date="2001" name="Mol. Genet. Genomics">
        <title>Functional cloning, based on azole resistance in Saccharomyces cerevisiae, and characterization of Rhizopus nigricans redox carriers that are differentially involved in the P450-dependent response to progesterone stress.</title>
        <authorList>
            <person name="Kunic B."/>
            <person name="Truan G."/>
            <person name="Breskvar K."/>
            <person name="Pompon D."/>
        </authorList>
    </citation>
    <scope>NUCLEOTIDE SEQUENCE [MRNA]</scope>
</reference>
<feature type="chain" id="PRO_0000166032" description="Cytochrome b5">
    <location>
        <begin position="1"/>
        <end position="131"/>
    </location>
</feature>
<feature type="transmembrane region" description="Helical" evidence="2">
    <location>
        <begin position="108"/>
        <end position="125"/>
    </location>
</feature>
<feature type="domain" description="Cytochrome b5 heme-binding" evidence="3">
    <location>
        <begin position="3"/>
        <end position="79"/>
    </location>
</feature>
<feature type="binding site" description="axial binding residue" evidence="3">
    <location>
        <position position="38"/>
    </location>
    <ligand>
        <name>heme</name>
        <dbReference type="ChEBI" id="CHEBI:30413"/>
    </ligand>
    <ligandPart>
        <name>Fe</name>
        <dbReference type="ChEBI" id="CHEBI:18248"/>
    </ligandPart>
</feature>
<feature type="binding site" description="axial binding residue" evidence="3">
    <location>
        <position position="62"/>
    </location>
    <ligand>
        <name>heme</name>
        <dbReference type="ChEBI" id="CHEBI:30413"/>
    </ligand>
    <ligandPart>
        <name>Fe</name>
        <dbReference type="ChEBI" id="CHEBI:18248"/>
    </ligandPart>
</feature>
<sequence length="131" mass="14651">MTAKIFSLDEVSKHKTKSDLWVVIHNKVYDITRFVVEHPGGEEVLVDEGGKDATEAFEDIGHSDEAREMLEEYLIGSLDEASRTKEYNVNVIRAGELPEEKKGSSLRIILPALAIIGALVYKYVIVPKAHQ</sequence>